<proteinExistence type="inferred from homology"/>
<feature type="chain" id="PRO_0000178263" description="dITP/XTP pyrophosphatase">
    <location>
        <begin position="1"/>
        <end position="200"/>
    </location>
</feature>
<feature type="active site" description="Proton acceptor" evidence="1">
    <location>
        <position position="69"/>
    </location>
</feature>
<feature type="binding site" evidence="1">
    <location>
        <begin position="8"/>
        <end position="13"/>
    </location>
    <ligand>
        <name>substrate</name>
    </ligand>
</feature>
<feature type="binding site" evidence="1">
    <location>
        <position position="69"/>
    </location>
    <ligand>
        <name>Mg(2+)</name>
        <dbReference type="ChEBI" id="CHEBI:18420"/>
    </ligand>
</feature>
<feature type="binding site" evidence="1">
    <location>
        <position position="70"/>
    </location>
    <ligand>
        <name>substrate</name>
    </ligand>
</feature>
<feature type="binding site" evidence="1">
    <location>
        <begin position="154"/>
        <end position="157"/>
    </location>
    <ligand>
        <name>substrate</name>
    </ligand>
</feature>
<feature type="binding site" evidence="1">
    <location>
        <position position="177"/>
    </location>
    <ligand>
        <name>substrate</name>
    </ligand>
</feature>
<feature type="binding site" evidence="1">
    <location>
        <begin position="182"/>
        <end position="183"/>
    </location>
    <ligand>
        <name>substrate</name>
    </ligand>
</feature>
<protein>
    <recommendedName>
        <fullName evidence="1">dITP/XTP pyrophosphatase</fullName>
        <ecNumber evidence="1">3.6.1.66</ecNumber>
    </recommendedName>
    <alternativeName>
        <fullName evidence="1">Non-canonical purine NTP pyrophosphatase</fullName>
    </alternativeName>
    <alternativeName>
        <fullName evidence="1">Non-standard purine NTP pyrophosphatase</fullName>
    </alternativeName>
    <alternativeName>
        <fullName evidence="1">Nucleoside-triphosphate diphosphatase</fullName>
    </alternativeName>
    <alternativeName>
        <fullName evidence="1">Nucleoside-triphosphate pyrophosphatase</fullName>
        <shortName evidence="1">NTPase</shortName>
    </alternativeName>
</protein>
<reference key="1">
    <citation type="journal article" date="2003" name="Genome Res.">
        <title>Comparative genome analysis of Vibrio vulnificus, a marine pathogen.</title>
        <authorList>
            <person name="Chen C.-Y."/>
            <person name="Wu K.-M."/>
            <person name="Chang Y.-C."/>
            <person name="Chang C.-H."/>
            <person name="Tsai H.-C."/>
            <person name="Liao T.-L."/>
            <person name="Liu Y.-M."/>
            <person name="Chen H.-J."/>
            <person name="Shen A.B.-T."/>
            <person name="Li J.-C."/>
            <person name="Su T.-L."/>
            <person name="Shao C.-P."/>
            <person name="Lee C.-T."/>
            <person name="Hor L.-I."/>
            <person name="Tsai S.-F."/>
        </authorList>
    </citation>
    <scope>NUCLEOTIDE SEQUENCE [LARGE SCALE GENOMIC DNA]</scope>
    <source>
        <strain>YJ016</strain>
    </source>
</reference>
<sequence>MKKIVLATGNQGKVREMADLLADFGFDVVAQSEFNVSEVAETGTTFIENAIIKARHAAKETGLAAIADDSGLEVDFLQGAPGIYSARYAGEKASDQENLEKLLTAMEGVPEAQRTARFHCVLVLMRHENDPTPIVCHGKWEGRILTQAHGDNGFGYDPIFFVPEDNCASAELEPVRKKQLSHRGKALKQLFATLREQPLV</sequence>
<dbReference type="EC" id="3.6.1.66" evidence="1"/>
<dbReference type="EMBL" id="BA000037">
    <property type="protein sequence ID" value="BAC95643.1"/>
    <property type="status" value="ALT_INIT"/>
    <property type="molecule type" value="Genomic_DNA"/>
</dbReference>
<dbReference type="RefSeq" id="WP_011079456.1">
    <property type="nucleotide sequence ID" value="NC_005139.1"/>
</dbReference>
<dbReference type="SMR" id="Q7MHJ0"/>
<dbReference type="STRING" id="672.VV93_v1c25850"/>
<dbReference type="KEGG" id="vvy:VV2879"/>
<dbReference type="PATRIC" id="fig|196600.6.peg.2865"/>
<dbReference type="eggNOG" id="COG0127">
    <property type="taxonomic scope" value="Bacteria"/>
</dbReference>
<dbReference type="HOGENOM" id="CLU_082080_0_3_6"/>
<dbReference type="Proteomes" id="UP000002675">
    <property type="component" value="Chromosome I"/>
</dbReference>
<dbReference type="GO" id="GO:0005829">
    <property type="term" value="C:cytosol"/>
    <property type="evidence" value="ECO:0007669"/>
    <property type="project" value="TreeGrafter"/>
</dbReference>
<dbReference type="GO" id="GO:0035870">
    <property type="term" value="F:dITP diphosphatase activity"/>
    <property type="evidence" value="ECO:0007669"/>
    <property type="project" value="RHEA"/>
</dbReference>
<dbReference type="GO" id="GO:0036220">
    <property type="term" value="F:ITP diphosphatase activity"/>
    <property type="evidence" value="ECO:0007669"/>
    <property type="project" value="UniProtKB-EC"/>
</dbReference>
<dbReference type="GO" id="GO:0046872">
    <property type="term" value="F:metal ion binding"/>
    <property type="evidence" value="ECO:0007669"/>
    <property type="project" value="UniProtKB-KW"/>
</dbReference>
<dbReference type="GO" id="GO:0000166">
    <property type="term" value="F:nucleotide binding"/>
    <property type="evidence" value="ECO:0007669"/>
    <property type="project" value="UniProtKB-KW"/>
</dbReference>
<dbReference type="GO" id="GO:0017111">
    <property type="term" value="F:ribonucleoside triphosphate phosphatase activity"/>
    <property type="evidence" value="ECO:0007669"/>
    <property type="project" value="InterPro"/>
</dbReference>
<dbReference type="GO" id="GO:0036222">
    <property type="term" value="F:XTP diphosphatase activity"/>
    <property type="evidence" value="ECO:0007669"/>
    <property type="project" value="RHEA"/>
</dbReference>
<dbReference type="GO" id="GO:0009117">
    <property type="term" value="P:nucleotide metabolic process"/>
    <property type="evidence" value="ECO:0007669"/>
    <property type="project" value="UniProtKB-KW"/>
</dbReference>
<dbReference type="GO" id="GO:0009146">
    <property type="term" value="P:purine nucleoside triphosphate catabolic process"/>
    <property type="evidence" value="ECO:0007669"/>
    <property type="project" value="UniProtKB-UniRule"/>
</dbReference>
<dbReference type="CDD" id="cd00515">
    <property type="entry name" value="HAM1"/>
    <property type="match status" value="1"/>
</dbReference>
<dbReference type="FunFam" id="3.90.950.10:FF:000001">
    <property type="entry name" value="dITP/XTP pyrophosphatase"/>
    <property type="match status" value="1"/>
</dbReference>
<dbReference type="Gene3D" id="3.90.950.10">
    <property type="match status" value="1"/>
</dbReference>
<dbReference type="HAMAP" id="MF_01405">
    <property type="entry name" value="Non_canon_purine_NTPase"/>
    <property type="match status" value="1"/>
</dbReference>
<dbReference type="InterPro" id="IPR020922">
    <property type="entry name" value="dITP/XTP_pyrophosphatase"/>
</dbReference>
<dbReference type="InterPro" id="IPR029001">
    <property type="entry name" value="ITPase-like_fam"/>
</dbReference>
<dbReference type="InterPro" id="IPR002637">
    <property type="entry name" value="RdgB/HAM1"/>
</dbReference>
<dbReference type="NCBIfam" id="NF011397">
    <property type="entry name" value="PRK14822.1"/>
    <property type="match status" value="1"/>
</dbReference>
<dbReference type="NCBIfam" id="TIGR00042">
    <property type="entry name" value="RdgB/HAM1 family non-canonical purine NTP pyrophosphatase"/>
    <property type="match status" value="1"/>
</dbReference>
<dbReference type="PANTHER" id="PTHR11067:SF9">
    <property type="entry name" value="INOSINE TRIPHOSPHATE PYROPHOSPHATASE"/>
    <property type="match status" value="1"/>
</dbReference>
<dbReference type="PANTHER" id="PTHR11067">
    <property type="entry name" value="INOSINE TRIPHOSPHATE PYROPHOSPHATASE/HAM1 PROTEIN"/>
    <property type="match status" value="1"/>
</dbReference>
<dbReference type="Pfam" id="PF01725">
    <property type="entry name" value="Ham1p_like"/>
    <property type="match status" value="1"/>
</dbReference>
<dbReference type="SUPFAM" id="SSF52972">
    <property type="entry name" value="ITPase-like"/>
    <property type="match status" value="1"/>
</dbReference>
<evidence type="ECO:0000255" key="1">
    <source>
        <dbReference type="HAMAP-Rule" id="MF_01405"/>
    </source>
</evidence>
<evidence type="ECO:0000305" key="2"/>
<gene>
    <name type="ordered locus">VV2879</name>
</gene>
<accession>Q7MHJ0</accession>
<keyword id="KW-0378">Hydrolase</keyword>
<keyword id="KW-0460">Magnesium</keyword>
<keyword id="KW-0479">Metal-binding</keyword>
<keyword id="KW-0546">Nucleotide metabolism</keyword>
<keyword id="KW-0547">Nucleotide-binding</keyword>
<name>IXTPA_VIBVY</name>
<organism>
    <name type="scientific">Vibrio vulnificus (strain YJ016)</name>
    <dbReference type="NCBI Taxonomy" id="196600"/>
    <lineage>
        <taxon>Bacteria</taxon>
        <taxon>Pseudomonadati</taxon>
        <taxon>Pseudomonadota</taxon>
        <taxon>Gammaproteobacteria</taxon>
        <taxon>Vibrionales</taxon>
        <taxon>Vibrionaceae</taxon>
        <taxon>Vibrio</taxon>
    </lineage>
</organism>
<comment type="function">
    <text evidence="1">Pyrophosphatase that catalyzes the hydrolysis of nucleoside triphosphates to their monophosphate derivatives, with a high preference for the non-canonical purine nucleotides XTP (xanthosine triphosphate), dITP (deoxyinosine triphosphate) and ITP. Seems to function as a house-cleaning enzyme that removes non-canonical purine nucleotides from the nucleotide pool, thus preventing their incorporation into DNA/RNA and avoiding chromosomal lesions.</text>
</comment>
<comment type="catalytic activity">
    <reaction evidence="1">
        <text>XTP + H2O = XMP + diphosphate + H(+)</text>
        <dbReference type="Rhea" id="RHEA:28610"/>
        <dbReference type="ChEBI" id="CHEBI:15377"/>
        <dbReference type="ChEBI" id="CHEBI:15378"/>
        <dbReference type="ChEBI" id="CHEBI:33019"/>
        <dbReference type="ChEBI" id="CHEBI:57464"/>
        <dbReference type="ChEBI" id="CHEBI:61314"/>
        <dbReference type="EC" id="3.6.1.66"/>
    </reaction>
</comment>
<comment type="catalytic activity">
    <reaction evidence="1">
        <text>dITP + H2O = dIMP + diphosphate + H(+)</text>
        <dbReference type="Rhea" id="RHEA:28342"/>
        <dbReference type="ChEBI" id="CHEBI:15377"/>
        <dbReference type="ChEBI" id="CHEBI:15378"/>
        <dbReference type="ChEBI" id="CHEBI:33019"/>
        <dbReference type="ChEBI" id="CHEBI:61194"/>
        <dbReference type="ChEBI" id="CHEBI:61382"/>
        <dbReference type="EC" id="3.6.1.66"/>
    </reaction>
</comment>
<comment type="catalytic activity">
    <reaction evidence="1">
        <text>ITP + H2O = IMP + diphosphate + H(+)</text>
        <dbReference type="Rhea" id="RHEA:29399"/>
        <dbReference type="ChEBI" id="CHEBI:15377"/>
        <dbReference type="ChEBI" id="CHEBI:15378"/>
        <dbReference type="ChEBI" id="CHEBI:33019"/>
        <dbReference type="ChEBI" id="CHEBI:58053"/>
        <dbReference type="ChEBI" id="CHEBI:61402"/>
        <dbReference type="EC" id="3.6.1.66"/>
    </reaction>
</comment>
<comment type="cofactor">
    <cofactor evidence="1">
        <name>Mg(2+)</name>
        <dbReference type="ChEBI" id="CHEBI:18420"/>
    </cofactor>
    <text evidence="1">Binds 1 Mg(2+) ion per subunit.</text>
</comment>
<comment type="subunit">
    <text evidence="1">Homodimer.</text>
</comment>
<comment type="similarity">
    <text evidence="1">Belongs to the HAM1 NTPase family.</text>
</comment>
<comment type="sequence caution" evidence="2">
    <conflict type="erroneous initiation">
        <sequence resource="EMBL-CDS" id="BAC95643"/>
    </conflict>
</comment>